<accession>P0AFI2</accession>
<accession>O69154</accession>
<accession>P20082</accession>
<accession>Q2M9I1</accession>
<name>PARC_ECOLI</name>
<reference key="1">
    <citation type="journal article" date="1990" name="Cell">
        <title>New topoisomerase essential for chromosome segregation in E. coli.</title>
        <authorList>
            <person name="Kato J."/>
            <person name="Nishimura Y."/>
            <person name="Imamura R."/>
            <person name="Niki H."/>
            <person name="Hiraga S."/>
            <person name="Suzuki H."/>
        </authorList>
    </citation>
    <scope>NUCLEOTIDE SEQUENCE [GENOMIC DNA]</scope>
    <source>
        <strain>K12</strain>
    </source>
</reference>
<reference key="2">
    <citation type="journal article" date="1991" name="Cell">
        <authorList>
            <person name="Kato J."/>
            <person name="Nishimura Y."/>
            <person name="Imamura R."/>
            <person name="Niki H."/>
            <person name="Hiraga S."/>
            <person name="Suzuki H."/>
        </authorList>
    </citation>
    <scope>ERRATUM OF PUBMED:2170028</scope>
</reference>
<reference key="3">
    <citation type="journal article" date="1997" name="Science">
        <title>The complete genome sequence of Escherichia coli K-12.</title>
        <authorList>
            <person name="Blattner F.R."/>
            <person name="Plunkett G. III"/>
            <person name="Bloch C.A."/>
            <person name="Perna N.T."/>
            <person name="Burland V."/>
            <person name="Riley M."/>
            <person name="Collado-Vides J."/>
            <person name="Glasner J.D."/>
            <person name="Rode C.K."/>
            <person name="Mayhew G.F."/>
            <person name="Gregor J."/>
            <person name="Davis N.W."/>
            <person name="Kirkpatrick H.A."/>
            <person name="Goeden M.A."/>
            <person name="Rose D.J."/>
            <person name="Mau B."/>
            <person name="Shao Y."/>
        </authorList>
    </citation>
    <scope>NUCLEOTIDE SEQUENCE [LARGE SCALE GENOMIC DNA]</scope>
    <source>
        <strain>K12 / MG1655 / ATCC 47076</strain>
    </source>
</reference>
<reference key="4">
    <citation type="journal article" date="2006" name="Mol. Syst. Biol.">
        <title>Highly accurate genome sequences of Escherichia coli K-12 strains MG1655 and W3110.</title>
        <authorList>
            <person name="Hayashi K."/>
            <person name="Morooka N."/>
            <person name="Yamamoto Y."/>
            <person name="Fujita K."/>
            <person name="Isono K."/>
            <person name="Choi S."/>
            <person name="Ohtsubo E."/>
            <person name="Baba T."/>
            <person name="Wanner B.L."/>
            <person name="Mori H."/>
            <person name="Horiuchi T."/>
        </authorList>
    </citation>
    <scope>NUCLEOTIDE SEQUENCE [LARGE SCALE GENOMIC DNA]</scope>
    <source>
        <strain>K12 / W3110 / ATCC 27325 / DSM 5911</strain>
    </source>
</reference>
<reference key="5">
    <citation type="journal article" date="2010" name="Proc. Natl. Acad. Sci. U.S.A.">
        <title>Escherichia coli condensin MukB stimulates topoisomerase IV activity by a direct physical interaction.</title>
        <authorList>
            <person name="Li Y."/>
            <person name="Stewart N.K."/>
            <person name="Berger A.J."/>
            <person name="Vos S."/>
            <person name="Schoeffler A.J."/>
            <person name="Berger J.M."/>
            <person name="Chait B.T."/>
            <person name="Oakley M.G."/>
        </authorList>
    </citation>
    <scope>PROTEIN SEQUENCE OF 30-43; 97-113; 201-225 AND 552-564</scope>
    <scope>FUNCTION MODIFIED BY MUKB</scope>
    <scope>INTERACTION WITH MUKB</scope>
</reference>
<reference key="6">
    <citation type="journal article" date="1992" name="Mol. Gen. Genet.">
        <title>Characterization of the Escherichia coli gene for 1-acyl-sn-glycerol-3-phosphate acyltransferase (plsC).</title>
        <authorList>
            <person name="Coleman J."/>
        </authorList>
    </citation>
    <scope>NUCLEOTIDE SEQUENCE [GENOMIC DNA] OF 724-752</scope>
</reference>
<reference key="7">
    <citation type="journal article" date="1993" name="J. Biol. Chem.">
        <title>Escherichia coli topoisomerase IV. Purification, characterization, subunit structure, and subunit interactions.</title>
        <authorList>
            <person name="Peng H."/>
            <person name="Marians K.J."/>
        </authorList>
    </citation>
    <scope>SEQUENCE REVISION</scope>
    <scope>SUBUNIT</scope>
    <scope>CHARACTERIZATION</scope>
    <source>
        <strain>K12</strain>
    </source>
</reference>
<reference key="8">
    <citation type="journal article" date="2002" name="Biochemistry">
        <title>The Glu-84 of the ParC subunit plays critical roles in both topoisomerase IV-quinolone and topoisomerase IV-DNA interactions.</title>
        <authorList>
            <person name="Hiasa H."/>
        </authorList>
    </citation>
    <scope>MUTAGENESIS OF SER-80 AND GLU-84</scope>
    <scope>FUNCTION</scope>
    <scope>ACTIVITY REGULATION</scope>
    <scope>CATALYTIC ACTIVITY</scope>
</reference>
<reference key="9">
    <citation type="journal article" date="1997" name="Genes Dev.">
        <title>Topoisomerase IV, not gyrase, decatenates products of site-specific recombination in Escherichia coli.</title>
        <authorList>
            <person name="Zechiedrich E.L."/>
            <person name="Khodursky A.B."/>
            <person name="Cozzarelli N.R."/>
        </authorList>
    </citation>
    <scope>FUNCTION</scope>
</reference>
<reference key="10">
    <citation type="journal article" date="2011" name="Nucleic Acids Res.">
        <title>Use of divalent metal ions in the DNA cleavage reaction of topoisomerase IV.</title>
        <authorList>
            <person name="Pitts S.L."/>
            <person name="Liou G.F."/>
            <person name="Mitchenall L.A."/>
            <person name="Burgin A.B."/>
            <person name="Maxwell A."/>
            <person name="Neuman K.C."/>
            <person name="Osheroff N."/>
        </authorList>
    </citation>
    <scope>FUNCTION</scope>
    <scope>SUBUNIT</scope>
    <scope>CATALYTIC ACTIVITY</scope>
</reference>
<reference key="11">
    <citation type="journal article" date="2005" name="J. Mol. Biol.">
        <title>The structural basis for substrate specificity in DNA topoisomerase IV.</title>
        <authorList>
            <person name="Corbett K.D."/>
            <person name="Schoeffler A.J."/>
            <person name="Thomsen N.D."/>
            <person name="Berger J.M."/>
        </authorList>
    </citation>
    <scope>X-RAY CRYSTALLOGRAPHY (1.7 ANGSTROMS) OF 27-752</scope>
    <scope>FUNCTION</scope>
    <scope>CATALYTIC ACTIVITY</scope>
    <scope>INTERACTION WITH PARE</scope>
    <scope>SUBUNIT</scope>
</reference>
<gene>
    <name evidence="1" type="primary">parC</name>
    <name type="ordered locus">b3019</name>
    <name type="ordered locus">JW2987</name>
</gene>
<dbReference type="EC" id="5.6.2.2" evidence="1 4 5 7"/>
<dbReference type="EMBL" id="M58408">
    <property type="protein sequence ID" value="AAA24297.1"/>
    <property type="status" value="ALT_FRAME"/>
    <property type="molecule type" value="Genomic_DNA"/>
</dbReference>
<dbReference type="EMBL" id="M63491">
    <property type="protein sequence ID" value="AAA24396.1"/>
    <property type="molecule type" value="Genomic_DNA"/>
</dbReference>
<dbReference type="EMBL" id="U28377">
    <property type="protein sequence ID" value="AAA69187.1"/>
    <property type="molecule type" value="Genomic_DNA"/>
</dbReference>
<dbReference type="EMBL" id="U00096">
    <property type="protein sequence ID" value="AAC76055.1"/>
    <property type="molecule type" value="Genomic_DNA"/>
</dbReference>
<dbReference type="EMBL" id="AP009048">
    <property type="protein sequence ID" value="BAE77075.1"/>
    <property type="molecule type" value="Genomic_DNA"/>
</dbReference>
<dbReference type="EMBL" id="L22025">
    <property type="protein sequence ID" value="AAC36840.1"/>
    <property type="molecule type" value="Unassigned_DNA"/>
</dbReference>
<dbReference type="PIR" id="A65089">
    <property type="entry name" value="A65089"/>
</dbReference>
<dbReference type="RefSeq" id="NP_417491.1">
    <property type="nucleotide sequence ID" value="NC_000913.3"/>
</dbReference>
<dbReference type="RefSeq" id="WP_001281881.1">
    <property type="nucleotide sequence ID" value="NZ_LN832404.1"/>
</dbReference>
<dbReference type="PDB" id="1ZVT">
    <property type="method" value="X-ray"/>
    <property type="resolution" value="1.70 A"/>
    <property type="chains" value="A/B=497-752"/>
</dbReference>
<dbReference type="PDB" id="1ZVU">
    <property type="method" value="X-ray"/>
    <property type="resolution" value="3.00 A"/>
    <property type="chains" value="A=27-742"/>
</dbReference>
<dbReference type="PDB" id="4MN4">
    <property type="method" value="X-ray"/>
    <property type="resolution" value="2.30 A"/>
    <property type="chains" value="A/B=497-752"/>
</dbReference>
<dbReference type="PDBsum" id="1ZVT"/>
<dbReference type="PDBsum" id="1ZVU"/>
<dbReference type="PDBsum" id="4MN4"/>
<dbReference type="SMR" id="P0AFI2"/>
<dbReference type="BioGRID" id="4262365">
    <property type="interactions" value="23"/>
</dbReference>
<dbReference type="ComplexPortal" id="CPX-1104">
    <property type="entry name" value="Topoisomerase IV"/>
</dbReference>
<dbReference type="DIP" id="DIP-36030N"/>
<dbReference type="FunCoup" id="P0AFI2">
    <property type="interactions" value="239"/>
</dbReference>
<dbReference type="IntAct" id="P0AFI2">
    <property type="interactions" value="24"/>
</dbReference>
<dbReference type="MINT" id="P0AFI2"/>
<dbReference type="STRING" id="511145.b3019"/>
<dbReference type="BindingDB" id="P0AFI2"/>
<dbReference type="ChEMBL" id="CHEMBL1895"/>
<dbReference type="DrugBank" id="DB11943">
    <property type="generic name" value="Delafloxacin"/>
</dbReference>
<dbReference type="DrugBank" id="DB12924">
    <property type="generic name" value="Ozenoxacin"/>
</dbReference>
<dbReference type="DrugBank" id="DB11774">
    <property type="generic name" value="Pazufloxacin"/>
</dbReference>
<dbReference type="DrugBank" id="DB11892">
    <property type="generic name" value="Prulifloxacin"/>
</dbReference>
<dbReference type="DrugBank" id="DB00817">
    <property type="generic name" value="Rosoxacin"/>
</dbReference>
<dbReference type="DrugBank" id="DB16312">
    <property type="generic name" value="TNP-2092"/>
</dbReference>
<dbReference type="DrugCentral" id="P0AFI2"/>
<dbReference type="jPOST" id="P0AFI2"/>
<dbReference type="PaxDb" id="511145-b3019"/>
<dbReference type="EnsemblBacteria" id="AAC76055">
    <property type="protein sequence ID" value="AAC76055"/>
    <property type="gene ID" value="b3019"/>
</dbReference>
<dbReference type="GeneID" id="75203584"/>
<dbReference type="GeneID" id="947499"/>
<dbReference type="KEGG" id="ecj:JW2987"/>
<dbReference type="KEGG" id="eco:b3019"/>
<dbReference type="KEGG" id="ecoc:C3026_16495"/>
<dbReference type="PATRIC" id="fig|1411691.4.peg.3711"/>
<dbReference type="EchoBASE" id="EB0680"/>
<dbReference type="eggNOG" id="COG0188">
    <property type="taxonomic scope" value="Bacteria"/>
</dbReference>
<dbReference type="HOGENOM" id="CLU_002977_6_1_6"/>
<dbReference type="InParanoid" id="P0AFI2"/>
<dbReference type="OMA" id="MNVPDGH"/>
<dbReference type="OrthoDB" id="9806486at2"/>
<dbReference type="PhylomeDB" id="P0AFI2"/>
<dbReference type="BioCyc" id="EcoCyc:EG10686-MONOMER"/>
<dbReference type="EvolutionaryTrace" id="P0AFI2"/>
<dbReference type="PRO" id="PR:P0AFI2"/>
<dbReference type="Proteomes" id="UP000000625">
    <property type="component" value="Chromosome"/>
</dbReference>
<dbReference type="GO" id="GO:0005694">
    <property type="term" value="C:chromosome"/>
    <property type="evidence" value="ECO:0007669"/>
    <property type="project" value="InterPro"/>
</dbReference>
<dbReference type="GO" id="GO:0005737">
    <property type="term" value="C:cytoplasm"/>
    <property type="evidence" value="ECO:0000314"/>
    <property type="project" value="EcoliWiki"/>
</dbReference>
<dbReference type="GO" id="GO:0005829">
    <property type="term" value="C:cytosol"/>
    <property type="evidence" value="ECO:0000314"/>
    <property type="project" value="EcoCyc"/>
</dbReference>
<dbReference type="GO" id="GO:0009330">
    <property type="term" value="C:DNA topoisomerase type II (double strand cut, ATP-hydrolyzing) complex"/>
    <property type="evidence" value="ECO:0000314"/>
    <property type="project" value="EcoliWiki"/>
</dbReference>
<dbReference type="GO" id="GO:0019897">
    <property type="term" value="C:extrinsic component of plasma membrane"/>
    <property type="evidence" value="ECO:0000314"/>
    <property type="project" value="EcoliWiki"/>
</dbReference>
<dbReference type="GO" id="GO:0005524">
    <property type="term" value="F:ATP binding"/>
    <property type="evidence" value="ECO:0000318"/>
    <property type="project" value="GO_Central"/>
</dbReference>
<dbReference type="GO" id="GO:0003677">
    <property type="term" value="F:DNA binding"/>
    <property type="evidence" value="ECO:0000314"/>
    <property type="project" value="EcoliWiki"/>
</dbReference>
<dbReference type="GO" id="GO:0003918">
    <property type="term" value="F:DNA topoisomerase type II (double strand cut, ATP-hydrolyzing) activity"/>
    <property type="evidence" value="ECO:0007669"/>
    <property type="project" value="UniProtKB-UniRule"/>
</dbReference>
<dbReference type="GO" id="GO:0007059">
    <property type="term" value="P:chromosome segregation"/>
    <property type="evidence" value="ECO:0000314"/>
    <property type="project" value="EcoliWiki"/>
</dbReference>
<dbReference type="GO" id="GO:0006265">
    <property type="term" value="P:DNA topological change"/>
    <property type="evidence" value="ECO:0000314"/>
    <property type="project" value="EcoliWiki"/>
</dbReference>
<dbReference type="GO" id="GO:0030541">
    <property type="term" value="P:plasmid partitioning"/>
    <property type="evidence" value="ECO:0000314"/>
    <property type="project" value="EcoliWiki"/>
</dbReference>
<dbReference type="GO" id="GO:0007062">
    <property type="term" value="P:sister chromatid cohesion"/>
    <property type="evidence" value="ECO:0000315"/>
    <property type="project" value="EcoliWiki"/>
</dbReference>
<dbReference type="CDD" id="cd00187">
    <property type="entry name" value="TOP4c"/>
    <property type="match status" value="1"/>
</dbReference>
<dbReference type="FunFam" id="1.10.268.10:FF:000001">
    <property type="entry name" value="DNA gyrase subunit A"/>
    <property type="match status" value="1"/>
</dbReference>
<dbReference type="FunFam" id="2.120.10.90:FF:000003">
    <property type="entry name" value="DNA topoisomerase 4 subunit A"/>
    <property type="match status" value="1"/>
</dbReference>
<dbReference type="FunFam" id="3.30.1360.40:FF:000005">
    <property type="entry name" value="DNA topoisomerase 4 subunit A"/>
    <property type="match status" value="1"/>
</dbReference>
<dbReference type="Gene3D" id="3.30.1360.40">
    <property type="match status" value="1"/>
</dbReference>
<dbReference type="Gene3D" id="2.120.10.90">
    <property type="entry name" value="DNA gyrase/topoisomerase IV, subunit A, C-terminal"/>
    <property type="match status" value="1"/>
</dbReference>
<dbReference type="Gene3D" id="3.90.199.10">
    <property type="entry name" value="Topoisomerase II, domain 5"/>
    <property type="match status" value="1"/>
</dbReference>
<dbReference type="Gene3D" id="1.10.268.10">
    <property type="entry name" value="Topoisomerase, domain 3"/>
    <property type="match status" value="1"/>
</dbReference>
<dbReference type="HAMAP" id="MF_00936">
    <property type="entry name" value="ParC_type1"/>
    <property type="match status" value="1"/>
</dbReference>
<dbReference type="InterPro" id="IPR006691">
    <property type="entry name" value="GyrA/parC_rep"/>
</dbReference>
<dbReference type="InterPro" id="IPR035516">
    <property type="entry name" value="Gyrase/topoIV_suA_C"/>
</dbReference>
<dbReference type="InterPro" id="IPR013760">
    <property type="entry name" value="Topo_IIA-like_dom_sf"/>
</dbReference>
<dbReference type="InterPro" id="IPR013758">
    <property type="entry name" value="Topo_IIA_A/C_ab"/>
</dbReference>
<dbReference type="InterPro" id="IPR013757">
    <property type="entry name" value="Topo_IIA_A_a_sf"/>
</dbReference>
<dbReference type="InterPro" id="IPR002205">
    <property type="entry name" value="Topo_IIA_dom_A"/>
</dbReference>
<dbReference type="InterPro" id="IPR005742">
    <property type="entry name" value="TopoIV_A_Gneg"/>
</dbReference>
<dbReference type="InterPro" id="IPR050220">
    <property type="entry name" value="Type_II_DNA_Topoisomerases"/>
</dbReference>
<dbReference type="NCBIfam" id="TIGR01062">
    <property type="entry name" value="parC_Gneg"/>
    <property type="match status" value="1"/>
</dbReference>
<dbReference type="NCBIfam" id="NF004044">
    <property type="entry name" value="PRK05561.1"/>
    <property type="match status" value="1"/>
</dbReference>
<dbReference type="PANTHER" id="PTHR43493">
    <property type="entry name" value="DNA GYRASE/TOPOISOMERASE SUBUNIT A"/>
    <property type="match status" value="1"/>
</dbReference>
<dbReference type="PANTHER" id="PTHR43493:SF1">
    <property type="entry name" value="DNA TOPOISOMERASE 4 SUBUNIT A"/>
    <property type="match status" value="1"/>
</dbReference>
<dbReference type="Pfam" id="PF03989">
    <property type="entry name" value="DNA_gyraseA_C"/>
    <property type="match status" value="2"/>
</dbReference>
<dbReference type="Pfam" id="PF00521">
    <property type="entry name" value="DNA_topoisoIV"/>
    <property type="match status" value="1"/>
</dbReference>
<dbReference type="SMART" id="SM00434">
    <property type="entry name" value="TOP4c"/>
    <property type="match status" value="1"/>
</dbReference>
<dbReference type="SUPFAM" id="SSF101904">
    <property type="entry name" value="GyrA/ParC C-terminal domain-like"/>
    <property type="match status" value="1"/>
</dbReference>
<dbReference type="SUPFAM" id="SSF56719">
    <property type="entry name" value="Type II DNA topoisomerase"/>
    <property type="match status" value="1"/>
</dbReference>
<dbReference type="PROSITE" id="PS52040">
    <property type="entry name" value="TOPO_IIA"/>
    <property type="match status" value="1"/>
</dbReference>
<protein>
    <recommendedName>
        <fullName evidence="1">DNA topoisomerase 4 subunit A</fullName>
        <ecNumber evidence="1 4 5 7">5.6.2.2</ecNumber>
    </recommendedName>
    <alternativeName>
        <fullName evidence="1">Topoisomerase IV subunit A</fullName>
    </alternativeName>
</protein>
<proteinExistence type="evidence at protein level"/>
<keyword id="KW-0002">3D-structure</keyword>
<keyword id="KW-1003">Cell membrane</keyword>
<keyword id="KW-0903">Direct protein sequencing</keyword>
<keyword id="KW-0238">DNA-binding</keyword>
<keyword id="KW-0413">Isomerase</keyword>
<keyword id="KW-0472">Membrane</keyword>
<keyword id="KW-1185">Reference proteome</keyword>
<keyword id="KW-0799">Topoisomerase</keyword>
<organism>
    <name type="scientific">Escherichia coli (strain K12)</name>
    <dbReference type="NCBI Taxonomy" id="83333"/>
    <lineage>
        <taxon>Bacteria</taxon>
        <taxon>Pseudomonadati</taxon>
        <taxon>Pseudomonadota</taxon>
        <taxon>Gammaproteobacteria</taxon>
        <taxon>Enterobacterales</taxon>
        <taxon>Enterobacteriaceae</taxon>
        <taxon>Escherichia</taxon>
    </lineage>
</organism>
<evidence type="ECO:0000255" key="1">
    <source>
        <dbReference type="HAMAP-Rule" id="MF_00936"/>
    </source>
</evidence>
<evidence type="ECO:0000255" key="2">
    <source>
        <dbReference type="PROSITE-ProRule" id="PRU01384"/>
    </source>
</evidence>
<evidence type="ECO:0000256" key="3">
    <source>
        <dbReference type="SAM" id="MobiDB-lite"/>
    </source>
</evidence>
<evidence type="ECO:0000269" key="4">
    <source>
    </source>
</evidence>
<evidence type="ECO:0000269" key="5">
    <source>
    </source>
</evidence>
<evidence type="ECO:0000269" key="6">
    <source>
    </source>
</evidence>
<evidence type="ECO:0000269" key="7">
    <source>
    </source>
</evidence>
<evidence type="ECO:0000269" key="8">
    <source>
    </source>
</evidence>
<evidence type="ECO:0000269" key="9">
    <source>
    </source>
</evidence>
<evidence type="ECO:0000305" key="10"/>
<evidence type="ECO:0007829" key="11">
    <source>
        <dbReference type="PDB" id="1ZVT"/>
    </source>
</evidence>
<evidence type="ECO:0007829" key="12">
    <source>
        <dbReference type="PDB" id="1ZVU"/>
    </source>
</evidence>
<evidence type="ECO:0007829" key="13">
    <source>
        <dbReference type="PDB" id="4MN4"/>
    </source>
</evidence>
<sequence>MSDMAERLALHEFTENAYLNYSMYVIMDRALPFIGDGLKPVQRRIVYAMSELGLNASAKFKKSARTVGDVLGKYHPHGDSACYEAMVLMAQPFSYRYPLVDGQGNWGAPDDPKSFAAMRYTESRLSKYSELLLSELGQGTADWVPNFDGTLQEPKMLPARLPNILLNGTTGIAVGMATDIPPHNLREVAQAAIALIDQPKTTLDQLLDIVQGPDYPTEAEIITSRAEIRKIYENGRGSVRMRAVWKKEDGAVVISALPHQVSGARVLEQIAAQMRNKKLPMVDDLRDESDHENPTRLVIVPRSNRVDMDQVMNHLFATTDLEKSYRINLNMIGLDGRPAVKNLLEILSEWLVFRRDTVRRRLNYRLEKVLKRLHILEGLLVAFLNIDEVIEIIRNEDEPKPALMSRFGLTETQAEAILELKLRHLAKLEEMKIRGEQSELEKERDQLQGILASERKMNNLLKKELQADAQAYGDDRRSPLQEREEAKAMSEHDMLPSEPVTIVLSQMGWVRSAKGHDIDAPGLNYKAGDSFKAAVKGKSNQPVVFVDSTGRSYAIDPITLPSARGQGEPLTGKLTLPPGATVDHMLMESDDQKLLMASDAGYGFVCTFNDLVARNRAGKALITLPENAHVMPPVVIEDASDMLLAITQAGRMLMFPVSDLPQLSKGKGNKIINIPSAEAARGEDGLAQLYVLPPQSTLTIHVGKRKIKLRPEELQKVTGERGRRGTLMRGLQRIDRVEIDSPRRASSGDSEE</sequence>
<feature type="chain" id="PRO_0000145397" description="DNA topoisomerase 4 subunit A">
    <location>
        <begin position="1"/>
        <end position="752"/>
    </location>
</feature>
<feature type="domain" description="Topo IIA-type catalytic" evidence="2">
    <location>
        <begin position="31"/>
        <end position="494"/>
    </location>
</feature>
<feature type="region of interest" description="Disordered" evidence="3">
    <location>
        <begin position="472"/>
        <end position="492"/>
    </location>
</feature>
<feature type="region of interest" description="Sufficient for MukB binding">
    <location>
        <begin position="497"/>
        <end position="752"/>
    </location>
</feature>
<feature type="region of interest" description="Disordered" evidence="3">
    <location>
        <begin position="718"/>
        <end position="752"/>
    </location>
</feature>
<feature type="compositionally biased region" description="Basic and acidic residues" evidence="3">
    <location>
        <begin position="473"/>
        <end position="492"/>
    </location>
</feature>
<feature type="compositionally biased region" description="Basic and acidic residues" evidence="3">
    <location>
        <begin position="732"/>
        <end position="743"/>
    </location>
</feature>
<feature type="active site" description="O-(5'-phospho-DNA)-tyrosine intermediate" evidence="1">
    <location>
        <position position="120"/>
    </location>
</feature>
<feature type="site" description="Interaction with DNA" evidence="1">
    <location>
        <position position="39"/>
    </location>
</feature>
<feature type="site" description="Interaction with DNA" evidence="1">
    <location>
        <position position="75"/>
    </location>
</feature>
<feature type="site" description="Interaction with DNA" evidence="1">
    <location>
        <position position="77"/>
    </location>
</feature>
<feature type="site" description="Transition state stabilizer" evidence="1">
    <location>
        <position position="119"/>
    </location>
</feature>
<feature type="mutagenesis site" description="Confers resistance to quinolones. No effect on catalytic activity." evidence="4">
    <original>S</original>
    <variation>L</variation>
    <location>
        <position position="80"/>
    </location>
</feature>
<feature type="mutagenesis site" description="Strongly reduced enzyme activity. Increases stability of covalent reaction intermediate with DNA. Confers resistance to quinolones." evidence="4">
    <original>E</original>
    <variation>K</variation>
    <location>
        <position position="84"/>
    </location>
</feature>
<feature type="mutagenesis site" description="Confers resistance to quinolones." evidence="4">
    <original>E</original>
    <variation>P</variation>
    <location>
        <position position="84"/>
    </location>
</feature>
<feature type="turn" evidence="12">
    <location>
        <begin position="34"/>
        <end position="36"/>
    </location>
</feature>
<feature type="helix" evidence="12">
    <location>
        <begin position="40"/>
        <end position="49"/>
    </location>
</feature>
<feature type="helix" evidence="12">
    <location>
        <begin position="67"/>
        <end position="71"/>
    </location>
</feature>
<feature type="turn" evidence="12">
    <location>
        <begin position="72"/>
        <end position="74"/>
    </location>
</feature>
<feature type="helix" evidence="12">
    <location>
        <begin position="80"/>
        <end position="89"/>
    </location>
</feature>
<feature type="strand" evidence="12">
    <location>
        <begin position="99"/>
        <end position="102"/>
    </location>
</feature>
<feature type="strand" evidence="12">
    <location>
        <begin position="107"/>
        <end position="111"/>
    </location>
</feature>
<feature type="helix" evidence="12">
    <location>
        <begin position="120"/>
        <end position="122"/>
    </location>
</feature>
<feature type="strand" evidence="12">
    <location>
        <begin position="123"/>
        <end position="125"/>
    </location>
</feature>
<feature type="helix" evidence="12">
    <location>
        <begin position="127"/>
        <end position="129"/>
    </location>
</feature>
<feature type="helix" evidence="12">
    <location>
        <begin position="130"/>
        <end position="133"/>
    </location>
</feature>
<feature type="turn" evidence="12">
    <location>
        <begin position="134"/>
        <end position="137"/>
    </location>
</feature>
<feature type="strand" evidence="12">
    <location>
        <begin position="143"/>
        <end position="145"/>
    </location>
</feature>
<feature type="strand" evidence="12">
    <location>
        <begin position="149"/>
        <end position="156"/>
    </location>
</feature>
<feature type="helix" evidence="12">
    <location>
        <begin position="163"/>
        <end position="167"/>
    </location>
</feature>
<feature type="helix" evidence="12">
    <location>
        <begin position="185"/>
        <end position="197"/>
    </location>
</feature>
<feature type="helix" evidence="12">
    <location>
        <begin position="203"/>
        <end position="206"/>
    </location>
</feature>
<feature type="turn" evidence="12">
    <location>
        <begin position="207"/>
        <end position="209"/>
    </location>
</feature>
<feature type="strand" evidence="12">
    <location>
        <begin position="216"/>
        <end position="221"/>
    </location>
</feature>
<feature type="helix" evidence="12">
    <location>
        <begin position="227"/>
        <end position="234"/>
    </location>
</feature>
<feature type="strand" evidence="12">
    <location>
        <begin position="236"/>
        <end position="242"/>
    </location>
</feature>
<feature type="strand" evidence="12">
    <location>
        <begin position="244"/>
        <end position="248"/>
    </location>
</feature>
<feature type="strand" evidence="12">
    <location>
        <begin position="251"/>
        <end position="256"/>
    </location>
</feature>
<feature type="helix" evidence="12">
    <location>
        <begin position="263"/>
        <end position="275"/>
    </location>
</feature>
<feature type="strand" evidence="12">
    <location>
        <begin position="282"/>
        <end position="287"/>
    </location>
</feature>
<feature type="strand" evidence="12">
    <location>
        <begin position="291"/>
        <end position="293"/>
    </location>
</feature>
<feature type="strand" evidence="12">
    <location>
        <begin position="297"/>
        <end position="305"/>
    </location>
</feature>
<feature type="helix" evidence="12">
    <location>
        <begin position="308"/>
        <end position="318"/>
    </location>
</feature>
<feature type="strand" evidence="12">
    <location>
        <begin position="322"/>
        <end position="328"/>
    </location>
</feature>
<feature type="strand" evidence="12">
    <location>
        <begin position="330"/>
        <end position="332"/>
    </location>
</feature>
<feature type="strand" evidence="12">
    <location>
        <begin position="338"/>
        <end position="340"/>
    </location>
</feature>
<feature type="helix" evidence="12">
    <location>
        <begin position="343"/>
        <end position="384"/>
    </location>
</feature>
<feature type="helix" evidence="12">
    <location>
        <begin position="386"/>
        <end position="395"/>
    </location>
</feature>
<feature type="strand" evidence="12">
    <location>
        <begin position="396"/>
        <end position="398"/>
    </location>
</feature>
<feature type="helix" evidence="12">
    <location>
        <begin position="399"/>
        <end position="405"/>
    </location>
</feature>
<feature type="helix" evidence="12">
    <location>
        <begin position="413"/>
        <end position="418"/>
    </location>
</feature>
<feature type="helix" evidence="12">
    <location>
        <begin position="422"/>
        <end position="425"/>
    </location>
</feature>
<feature type="helix" evidence="12">
    <location>
        <begin position="427"/>
        <end position="452"/>
    </location>
</feature>
<feature type="helix" evidence="12">
    <location>
        <begin position="454"/>
        <end position="472"/>
    </location>
</feature>
<feature type="strand" evidence="11">
    <location>
        <begin position="499"/>
        <end position="505"/>
    </location>
</feature>
<feature type="strand" evidence="11">
    <location>
        <begin position="508"/>
        <end position="516"/>
    </location>
</feature>
<feature type="strand" evidence="13">
    <location>
        <begin position="520"/>
        <end position="523"/>
    </location>
</feature>
<feature type="strand" evidence="11">
    <location>
        <begin position="531"/>
        <end position="538"/>
    </location>
</feature>
<feature type="strand" evidence="12">
    <location>
        <begin position="539"/>
        <end position="541"/>
    </location>
</feature>
<feature type="strand" evidence="11">
    <location>
        <begin position="543"/>
        <end position="547"/>
    </location>
</feature>
<feature type="strand" evidence="11">
    <location>
        <begin position="550"/>
        <end position="555"/>
    </location>
</feature>
<feature type="helix" evidence="11">
    <location>
        <begin position="557"/>
        <end position="559"/>
    </location>
</feature>
<feature type="strand" evidence="11">
    <location>
        <begin position="563"/>
        <end position="565"/>
    </location>
</feature>
<feature type="helix" evidence="11">
    <location>
        <begin position="570"/>
        <end position="572"/>
    </location>
</feature>
<feature type="strand" evidence="11">
    <location>
        <begin position="582"/>
        <end position="586"/>
    </location>
</feature>
<feature type="strand" evidence="11">
    <location>
        <begin position="593"/>
        <end position="598"/>
    </location>
</feature>
<feature type="strand" evidence="11">
    <location>
        <begin position="601"/>
        <end position="607"/>
    </location>
</feature>
<feature type="helix" evidence="11">
    <location>
        <begin position="608"/>
        <end position="611"/>
    </location>
</feature>
<feature type="strand" evidence="11">
    <location>
        <begin position="642"/>
        <end position="647"/>
    </location>
</feature>
<feature type="strand" evidence="11">
    <location>
        <begin position="650"/>
        <end position="656"/>
    </location>
</feature>
<feature type="helix" evidence="11">
    <location>
        <begin position="657"/>
        <end position="659"/>
    </location>
</feature>
<feature type="strand" evidence="11">
    <location>
        <begin position="664"/>
        <end position="667"/>
    </location>
</feature>
<feature type="strand" evidence="11">
    <location>
        <begin position="669"/>
        <end position="672"/>
    </location>
</feature>
<feature type="helix" evidence="11">
    <location>
        <begin position="676"/>
        <end position="680"/>
    </location>
</feature>
<feature type="strand" evidence="11">
    <location>
        <begin position="686"/>
        <end position="692"/>
    </location>
</feature>
<feature type="strand" evidence="11">
    <location>
        <begin position="697"/>
        <end position="702"/>
    </location>
</feature>
<feature type="strand" evidence="11">
    <location>
        <begin position="705"/>
        <end position="709"/>
    </location>
</feature>
<feature type="helix" evidence="11">
    <location>
        <begin position="711"/>
        <end position="715"/>
    </location>
</feature>
<feature type="strand" evidence="11">
    <location>
        <begin position="736"/>
        <end position="740"/>
    </location>
</feature>
<comment type="function">
    <text evidence="4 5 6 7 9">Topoisomerase IV is essential for chromosome segregation; it is the principal protein responsible for decatenating newly replicated chromosomes (PubMed:9334322). It relaxes supercoiled DNA (PubMed:12269820, PubMed:16023670, PubMed:21300644). MukB stimulates the relaxation activity of topoisomerase IV and also has a modest effect on decatenation (PubMed:20921377).</text>
</comment>
<comment type="catalytic activity">
    <reaction evidence="1 4 5 7">
        <text>ATP-dependent breakage, passage and rejoining of double-stranded DNA.</text>
        <dbReference type="EC" id="5.6.2.2"/>
    </reaction>
</comment>
<comment type="activity regulation">
    <text evidence="4">Inhibited by quinolones.</text>
</comment>
<comment type="subunit">
    <text evidence="1 5 6 7 8">Heterotetramer composed of ParC and ParE. Interacts with MukB.</text>
</comment>
<comment type="interaction">
    <interactant intactId="EBI-878544">
        <id>P0AFI2</id>
    </interactant>
    <interactant intactId="EBI-542943">
        <id>P22523</id>
        <label>mukB</label>
    </interactant>
    <organismsDiffer>false</organismsDiffer>
    <experiments>11</experiments>
</comment>
<comment type="interaction">
    <interactant intactId="EBI-878544">
        <id>P0AFI2</id>
    </interactant>
    <interactant intactId="EBI-543702">
        <id>P0A7K2</id>
        <label>rplL</label>
    </interactant>
    <organismsDiffer>false</organismsDiffer>
    <experiments>3</experiments>
</comment>
<comment type="subcellular location">
    <subcellularLocation>
        <location>Cell membrane</location>
        <topology>Peripheral membrane protein</topology>
    </subcellularLocation>
</comment>
<comment type="similarity">
    <text evidence="1">Belongs to the type II topoisomerase GyrA/ParC subunit family. ParC type 1 subfamily.</text>
</comment>
<comment type="sequence caution" evidence="10">
    <conflict type="frameshift">
        <sequence resource="EMBL-CDS" id="AAA24297"/>
    </conflict>
</comment>